<accession>Q0RF99</accession>
<sequence>MPKQKSHSGASKRFRITGSGKVVRQKANRRHLLEHKSSRRTRRLAGVEPLTKADAGRIKRLLAR</sequence>
<reference key="1">
    <citation type="journal article" date="2007" name="Genome Res.">
        <title>Genome characteristics of facultatively symbiotic Frankia sp. strains reflect host range and host plant biogeography.</title>
        <authorList>
            <person name="Normand P."/>
            <person name="Lapierre P."/>
            <person name="Tisa L.S."/>
            <person name="Gogarten J.P."/>
            <person name="Alloisio N."/>
            <person name="Bagnarol E."/>
            <person name="Bassi C.A."/>
            <person name="Berry A.M."/>
            <person name="Bickhart D.M."/>
            <person name="Choisne N."/>
            <person name="Couloux A."/>
            <person name="Cournoyer B."/>
            <person name="Cruveiller S."/>
            <person name="Daubin V."/>
            <person name="Demange N."/>
            <person name="Francino M.P."/>
            <person name="Goltsman E."/>
            <person name="Huang Y."/>
            <person name="Kopp O.R."/>
            <person name="Labarre L."/>
            <person name="Lapidus A."/>
            <person name="Lavire C."/>
            <person name="Marechal J."/>
            <person name="Martinez M."/>
            <person name="Mastronunzio J.E."/>
            <person name="Mullin B.C."/>
            <person name="Niemann J."/>
            <person name="Pujic P."/>
            <person name="Rawnsley T."/>
            <person name="Rouy Z."/>
            <person name="Schenowitz C."/>
            <person name="Sellstedt A."/>
            <person name="Tavares F."/>
            <person name="Tomkins J.P."/>
            <person name="Vallenet D."/>
            <person name="Valverde C."/>
            <person name="Wall L.G."/>
            <person name="Wang Y."/>
            <person name="Medigue C."/>
            <person name="Benson D.R."/>
        </authorList>
    </citation>
    <scope>NUCLEOTIDE SEQUENCE [LARGE SCALE GENOMIC DNA]</scope>
    <source>
        <strain>DSM 45986 / CECT 9034 / ACN14a</strain>
    </source>
</reference>
<keyword id="KW-1185">Reference proteome</keyword>
<keyword id="KW-0687">Ribonucleoprotein</keyword>
<keyword id="KW-0689">Ribosomal protein</keyword>
<evidence type="ECO:0000255" key="1">
    <source>
        <dbReference type="HAMAP-Rule" id="MF_00514"/>
    </source>
</evidence>
<evidence type="ECO:0000256" key="2">
    <source>
        <dbReference type="SAM" id="MobiDB-lite"/>
    </source>
</evidence>
<evidence type="ECO:0000305" key="3"/>
<gene>
    <name evidence="1" type="primary">rpmI</name>
    <name type="ordered locus">FRAAL5215</name>
</gene>
<proteinExistence type="inferred from homology"/>
<name>RL35_FRAAA</name>
<dbReference type="EMBL" id="CT573213">
    <property type="protein sequence ID" value="CAJ63848.1"/>
    <property type="molecule type" value="Genomic_DNA"/>
</dbReference>
<dbReference type="RefSeq" id="WP_011606309.1">
    <property type="nucleotide sequence ID" value="NC_008278.1"/>
</dbReference>
<dbReference type="SMR" id="Q0RF99"/>
<dbReference type="STRING" id="326424.FRAAL5215"/>
<dbReference type="KEGG" id="fal:FRAAL5215"/>
<dbReference type="eggNOG" id="COG0291">
    <property type="taxonomic scope" value="Bacteria"/>
</dbReference>
<dbReference type="HOGENOM" id="CLU_169643_4_2_11"/>
<dbReference type="OrthoDB" id="9804851at2"/>
<dbReference type="Proteomes" id="UP000000657">
    <property type="component" value="Chromosome"/>
</dbReference>
<dbReference type="GO" id="GO:0022625">
    <property type="term" value="C:cytosolic large ribosomal subunit"/>
    <property type="evidence" value="ECO:0007669"/>
    <property type="project" value="TreeGrafter"/>
</dbReference>
<dbReference type="GO" id="GO:0003735">
    <property type="term" value="F:structural constituent of ribosome"/>
    <property type="evidence" value="ECO:0007669"/>
    <property type="project" value="InterPro"/>
</dbReference>
<dbReference type="GO" id="GO:0006412">
    <property type="term" value="P:translation"/>
    <property type="evidence" value="ECO:0007669"/>
    <property type="project" value="UniProtKB-UniRule"/>
</dbReference>
<dbReference type="FunFam" id="4.10.410.60:FF:000001">
    <property type="entry name" value="50S ribosomal protein L35"/>
    <property type="match status" value="1"/>
</dbReference>
<dbReference type="Gene3D" id="4.10.410.60">
    <property type="match status" value="1"/>
</dbReference>
<dbReference type="HAMAP" id="MF_00514">
    <property type="entry name" value="Ribosomal_bL35"/>
    <property type="match status" value="1"/>
</dbReference>
<dbReference type="InterPro" id="IPR001706">
    <property type="entry name" value="Ribosomal_bL35"/>
</dbReference>
<dbReference type="InterPro" id="IPR021137">
    <property type="entry name" value="Ribosomal_bL35-like"/>
</dbReference>
<dbReference type="InterPro" id="IPR018265">
    <property type="entry name" value="Ribosomal_bL35_CS"/>
</dbReference>
<dbReference type="InterPro" id="IPR037229">
    <property type="entry name" value="Ribosomal_bL35_sf"/>
</dbReference>
<dbReference type="NCBIfam" id="TIGR00001">
    <property type="entry name" value="rpmI_bact"/>
    <property type="match status" value="1"/>
</dbReference>
<dbReference type="PANTHER" id="PTHR33343">
    <property type="entry name" value="54S RIBOSOMAL PROTEIN BL35M"/>
    <property type="match status" value="1"/>
</dbReference>
<dbReference type="PANTHER" id="PTHR33343:SF1">
    <property type="entry name" value="LARGE RIBOSOMAL SUBUNIT PROTEIN BL35M"/>
    <property type="match status" value="1"/>
</dbReference>
<dbReference type="Pfam" id="PF01632">
    <property type="entry name" value="Ribosomal_L35p"/>
    <property type="match status" value="1"/>
</dbReference>
<dbReference type="PRINTS" id="PR00064">
    <property type="entry name" value="RIBOSOMALL35"/>
</dbReference>
<dbReference type="SUPFAM" id="SSF143034">
    <property type="entry name" value="L35p-like"/>
    <property type="match status" value="1"/>
</dbReference>
<dbReference type="PROSITE" id="PS00936">
    <property type="entry name" value="RIBOSOMAL_L35"/>
    <property type="match status" value="1"/>
</dbReference>
<organism>
    <name type="scientific">Frankia alni (strain DSM 45986 / CECT 9034 / ACN14a)</name>
    <dbReference type="NCBI Taxonomy" id="326424"/>
    <lineage>
        <taxon>Bacteria</taxon>
        <taxon>Bacillati</taxon>
        <taxon>Actinomycetota</taxon>
        <taxon>Actinomycetes</taxon>
        <taxon>Frankiales</taxon>
        <taxon>Frankiaceae</taxon>
        <taxon>Frankia</taxon>
    </lineage>
</organism>
<protein>
    <recommendedName>
        <fullName evidence="1">Large ribosomal subunit protein bL35</fullName>
    </recommendedName>
    <alternativeName>
        <fullName evidence="3">50S ribosomal protein L35</fullName>
    </alternativeName>
</protein>
<feature type="chain" id="PRO_1000050689" description="Large ribosomal subunit protein bL35">
    <location>
        <begin position="1"/>
        <end position="64"/>
    </location>
</feature>
<feature type="region of interest" description="Disordered" evidence="2">
    <location>
        <begin position="1"/>
        <end position="64"/>
    </location>
</feature>
<feature type="compositionally biased region" description="Basic residues" evidence="2">
    <location>
        <begin position="1"/>
        <end position="15"/>
    </location>
</feature>
<feature type="compositionally biased region" description="Basic residues" evidence="2">
    <location>
        <begin position="23"/>
        <end position="43"/>
    </location>
</feature>
<comment type="similarity">
    <text evidence="1">Belongs to the bacterial ribosomal protein bL35 family.</text>
</comment>